<feature type="chain" id="PRO_1000051769" description="Small ribosomal subunit protein uS8">
    <location>
        <begin position="1"/>
        <end position="131"/>
    </location>
</feature>
<dbReference type="EMBL" id="CP000526">
    <property type="protein sequence ID" value="ABM50215.1"/>
    <property type="molecule type" value="Genomic_DNA"/>
</dbReference>
<dbReference type="RefSeq" id="WP_004185153.1">
    <property type="nucleotide sequence ID" value="NC_008785.1"/>
</dbReference>
<dbReference type="SMR" id="A1V889"/>
<dbReference type="GeneID" id="93061818"/>
<dbReference type="KEGG" id="bmv:BMASAVP1_A3155"/>
<dbReference type="HOGENOM" id="CLU_098428_0_0_4"/>
<dbReference type="GO" id="GO:1990904">
    <property type="term" value="C:ribonucleoprotein complex"/>
    <property type="evidence" value="ECO:0007669"/>
    <property type="project" value="UniProtKB-KW"/>
</dbReference>
<dbReference type="GO" id="GO:0005840">
    <property type="term" value="C:ribosome"/>
    <property type="evidence" value="ECO:0007669"/>
    <property type="project" value="UniProtKB-KW"/>
</dbReference>
<dbReference type="GO" id="GO:0019843">
    <property type="term" value="F:rRNA binding"/>
    <property type="evidence" value="ECO:0007669"/>
    <property type="project" value="UniProtKB-UniRule"/>
</dbReference>
<dbReference type="GO" id="GO:0003735">
    <property type="term" value="F:structural constituent of ribosome"/>
    <property type="evidence" value="ECO:0007669"/>
    <property type="project" value="InterPro"/>
</dbReference>
<dbReference type="GO" id="GO:0006412">
    <property type="term" value="P:translation"/>
    <property type="evidence" value="ECO:0007669"/>
    <property type="project" value="UniProtKB-UniRule"/>
</dbReference>
<dbReference type="FunFam" id="3.30.1370.30:FF:000003">
    <property type="entry name" value="30S ribosomal protein S8"/>
    <property type="match status" value="1"/>
</dbReference>
<dbReference type="FunFam" id="3.30.1490.10:FF:000001">
    <property type="entry name" value="30S ribosomal protein S8"/>
    <property type="match status" value="1"/>
</dbReference>
<dbReference type="Gene3D" id="3.30.1370.30">
    <property type="match status" value="1"/>
</dbReference>
<dbReference type="Gene3D" id="3.30.1490.10">
    <property type="match status" value="1"/>
</dbReference>
<dbReference type="HAMAP" id="MF_01302_B">
    <property type="entry name" value="Ribosomal_uS8_B"/>
    <property type="match status" value="1"/>
</dbReference>
<dbReference type="InterPro" id="IPR000630">
    <property type="entry name" value="Ribosomal_uS8"/>
</dbReference>
<dbReference type="InterPro" id="IPR047863">
    <property type="entry name" value="Ribosomal_uS8_CS"/>
</dbReference>
<dbReference type="InterPro" id="IPR035987">
    <property type="entry name" value="Ribosomal_uS8_sf"/>
</dbReference>
<dbReference type="NCBIfam" id="NF001109">
    <property type="entry name" value="PRK00136.1"/>
    <property type="match status" value="1"/>
</dbReference>
<dbReference type="PANTHER" id="PTHR11758">
    <property type="entry name" value="40S RIBOSOMAL PROTEIN S15A"/>
    <property type="match status" value="1"/>
</dbReference>
<dbReference type="Pfam" id="PF00410">
    <property type="entry name" value="Ribosomal_S8"/>
    <property type="match status" value="1"/>
</dbReference>
<dbReference type="SUPFAM" id="SSF56047">
    <property type="entry name" value="Ribosomal protein S8"/>
    <property type="match status" value="1"/>
</dbReference>
<dbReference type="PROSITE" id="PS00053">
    <property type="entry name" value="RIBOSOMAL_S8"/>
    <property type="match status" value="1"/>
</dbReference>
<proteinExistence type="inferred from homology"/>
<sequence>MSMSDPIADMLTRIRNAQMVEKVSVSMPSSKVKVAIAQVLKDEGYIDDFAVKADGAKAELNIALKYYAGRPVIERLERVSKPGLRVYRGRNEIPQVMNGLGVAIVSTPKGVMTDRKARATGVGGEVICYVA</sequence>
<protein>
    <recommendedName>
        <fullName evidence="1">Small ribosomal subunit protein uS8</fullName>
    </recommendedName>
    <alternativeName>
        <fullName evidence="2">30S ribosomal protein S8</fullName>
    </alternativeName>
</protein>
<gene>
    <name evidence="1" type="primary">rpsH</name>
    <name type="ordered locus">BMASAVP1_A3155</name>
</gene>
<keyword id="KW-0687">Ribonucleoprotein</keyword>
<keyword id="KW-0689">Ribosomal protein</keyword>
<keyword id="KW-0694">RNA-binding</keyword>
<keyword id="KW-0699">rRNA-binding</keyword>
<organism>
    <name type="scientific">Burkholderia mallei (strain SAVP1)</name>
    <dbReference type="NCBI Taxonomy" id="320388"/>
    <lineage>
        <taxon>Bacteria</taxon>
        <taxon>Pseudomonadati</taxon>
        <taxon>Pseudomonadota</taxon>
        <taxon>Betaproteobacteria</taxon>
        <taxon>Burkholderiales</taxon>
        <taxon>Burkholderiaceae</taxon>
        <taxon>Burkholderia</taxon>
        <taxon>pseudomallei group</taxon>
    </lineage>
</organism>
<comment type="function">
    <text evidence="1">One of the primary rRNA binding proteins, it binds directly to 16S rRNA central domain where it helps coordinate assembly of the platform of the 30S subunit.</text>
</comment>
<comment type="subunit">
    <text evidence="1">Part of the 30S ribosomal subunit. Contacts proteins S5 and S12.</text>
</comment>
<comment type="similarity">
    <text evidence="1">Belongs to the universal ribosomal protein uS8 family.</text>
</comment>
<accession>A1V889</accession>
<name>RS8_BURMS</name>
<reference key="1">
    <citation type="journal article" date="2010" name="Genome Biol. Evol.">
        <title>Continuing evolution of Burkholderia mallei through genome reduction and large-scale rearrangements.</title>
        <authorList>
            <person name="Losada L."/>
            <person name="Ronning C.M."/>
            <person name="DeShazer D."/>
            <person name="Woods D."/>
            <person name="Fedorova N."/>
            <person name="Kim H.S."/>
            <person name="Shabalina S.A."/>
            <person name="Pearson T.R."/>
            <person name="Brinkac L."/>
            <person name="Tan P."/>
            <person name="Nandi T."/>
            <person name="Crabtree J."/>
            <person name="Badger J."/>
            <person name="Beckstrom-Sternberg S."/>
            <person name="Saqib M."/>
            <person name="Schutzer S.E."/>
            <person name="Keim P."/>
            <person name="Nierman W.C."/>
        </authorList>
    </citation>
    <scope>NUCLEOTIDE SEQUENCE [LARGE SCALE GENOMIC DNA]</scope>
    <source>
        <strain>SAVP1</strain>
    </source>
</reference>
<evidence type="ECO:0000255" key="1">
    <source>
        <dbReference type="HAMAP-Rule" id="MF_01302"/>
    </source>
</evidence>
<evidence type="ECO:0000305" key="2"/>